<name>ATPF_ECO24</name>
<sequence length="156" mass="17264">MNLNATILGQAIAFVLFVLFCMKYVWPPLMAAIEKRQKEIADGLASAERAHKDLDLAKASATDQLKKAKAEAQVIIEQANKRRSQILDEAKAEAEQERTKIVAQAQAEIEAERKRAREELRKQVAILAVAGAEKIIERSVDEAANSDIVDKLVAEL</sequence>
<reference key="1">
    <citation type="journal article" date="2008" name="J. Bacteriol.">
        <title>The pangenome structure of Escherichia coli: comparative genomic analysis of E. coli commensal and pathogenic isolates.</title>
        <authorList>
            <person name="Rasko D.A."/>
            <person name="Rosovitz M.J."/>
            <person name="Myers G.S.A."/>
            <person name="Mongodin E.F."/>
            <person name="Fricke W.F."/>
            <person name="Gajer P."/>
            <person name="Crabtree J."/>
            <person name="Sebaihia M."/>
            <person name="Thomson N.R."/>
            <person name="Chaudhuri R."/>
            <person name="Henderson I.R."/>
            <person name="Sperandio V."/>
            <person name="Ravel J."/>
        </authorList>
    </citation>
    <scope>NUCLEOTIDE SEQUENCE [LARGE SCALE GENOMIC DNA]</scope>
    <source>
        <strain>E24377A / ETEC</strain>
    </source>
</reference>
<accession>A7ZTU8</accession>
<evidence type="ECO:0000255" key="1">
    <source>
        <dbReference type="HAMAP-Rule" id="MF_01398"/>
    </source>
</evidence>
<organism>
    <name type="scientific">Escherichia coli O139:H28 (strain E24377A / ETEC)</name>
    <dbReference type="NCBI Taxonomy" id="331111"/>
    <lineage>
        <taxon>Bacteria</taxon>
        <taxon>Pseudomonadati</taxon>
        <taxon>Pseudomonadota</taxon>
        <taxon>Gammaproteobacteria</taxon>
        <taxon>Enterobacterales</taxon>
        <taxon>Enterobacteriaceae</taxon>
        <taxon>Escherichia</taxon>
    </lineage>
</organism>
<dbReference type="EMBL" id="CP000800">
    <property type="protein sequence ID" value="ABV18345.1"/>
    <property type="molecule type" value="Genomic_DNA"/>
</dbReference>
<dbReference type="RefSeq" id="WP_001052219.1">
    <property type="nucleotide sequence ID" value="NC_009801.1"/>
</dbReference>
<dbReference type="BMRB" id="A7ZTU8"/>
<dbReference type="SMR" id="A7ZTU8"/>
<dbReference type="GeneID" id="93778231"/>
<dbReference type="KEGG" id="ecw:EcE24377A_4252"/>
<dbReference type="HOGENOM" id="CLU_079215_4_5_6"/>
<dbReference type="Proteomes" id="UP000001122">
    <property type="component" value="Chromosome"/>
</dbReference>
<dbReference type="GO" id="GO:0005886">
    <property type="term" value="C:plasma membrane"/>
    <property type="evidence" value="ECO:0007669"/>
    <property type="project" value="UniProtKB-SubCell"/>
</dbReference>
<dbReference type="GO" id="GO:0045259">
    <property type="term" value="C:proton-transporting ATP synthase complex"/>
    <property type="evidence" value="ECO:0007669"/>
    <property type="project" value="UniProtKB-KW"/>
</dbReference>
<dbReference type="GO" id="GO:0046933">
    <property type="term" value="F:proton-transporting ATP synthase activity, rotational mechanism"/>
    <property type="evidence" value="ECO:0007669"/>
    <property type="project" value="UniProtKB-UniRule"/>
</dbReference>
<dbReference type="GO" id="GO:0046961">
    <property type="term" value="F:proton-transporting ATPase activity, rotational mechanism"/>
    <property type="evidence" value="ECO:0007669"/>
    <property type="project" value="TreeGrafter"/>
</dbReference>
<dbReference type="CDD" id="cd06503">
    <property type="entry name" value="ATP-synt_Fo_b"/>
    <property type="match status" value="1"/>
</dbReference>
<dbReference type="FunFam" id="1.20.5.620:FF:000001">
    <property type="entry name" value="ATP synthase subunit b"/>
    <property type="match status" value="1"/>
</dbReference>
<dbReference type="Gene3D" id="1.20.5.620">
    <property type="entry name" value="F1F0 ATP synthase subunit B, membrane domain"/>
    <property type="match status" value="1"/>
</dbReference>
<dbReference type="HAMAP" id="MF_01398">
    <property type="entry name" value="ATP_synth_b_bprime"/>
    <property type="match status" value="1"/>
</dbReference>
<dbReference type="InterPro" id="IPR028987">
    <property type="entry name" value="ATP_synth_B-like_membr_sf"/>
</dbReference>
<dbReference type="InterPro" id="IPR002146">
    <property type="entry name" value="ATP_synth_b/b'su_bac/chlpt"/>
</dbReference>
<dbReference type="InterPro" id="IPR005864">
    <property type="entry name" value="ATP_synth_F0_bsu_bac"/>
</dbReference>
<dbReference type="InterPro" id="IPR050059">
    <property type="entry name" value="ATP_synthase_B_chain"/>
</dbReference>
<dbReference type="NCBIfam" id="TIGR01144">
    <property type="entry name" value="ATP_synt_b"/>
    <property type="match status" value="1"/>
</dbReference>
<dbReference type="NCBIfam" id="NF004411">
    <property type="entry name" value="PRK05759.1-2"/>
    <property type="match status" value="1"/>
</dbReference>
<dbReference type="NCBIfam" id="NF004413">
    <property type="entry name" value="PRK05759.1-4"/>
    <property type="match status" value="1"/>
</dbReference>
<dbReference type="PANTHER" id="PTHR33445:SF1">
    <property type="entry name" value="ATP SYNTHASE SUBUNIT B"/>
    <property type="match status" value="1"/>
</dbReference>
<dbReference type="PANTHER" id="PTHR33445">
    <property type="entry name" value="ATP SYNTHASE SUBUNIT B', CHLOROPLASTIC"/>
    <property type="match status" value="1"/>
</dbReference>
<dbReference type="Pfam" id="PF00430">
    <property type="entry name" value="ATP-synt_B"/>
    <property type="match status" value="1"/>
</dbReference>
<dbReference type="SUPFAM" id="SSF81573">
    <property type="entry name" value="F1F0 ATP synthase subunit B, membrane domain"/>
    <property type="match status" value="1"/>
</dbReference>
<keyword id="KW-0066">ATP synthesis</keyword>
<keyword id="KW-0997">Cell inner membrane</keyword>
<keyword id="KW-1003">Cell membrane</keyword>
<keyword id="KW-0138">CF(0)</keyword>
<keyword id="KW-0375">Hydrogen ion transport</keyword>
<keyword id="KW-0406">Ion transport</keyword>
<keyword id="KW-0472">Membrane</keyword>
<keyword id="KW-1185">Reference proteome</keyword>
<keyword id="KW-0812">Transmembrane</keyword>
<keyword id="KW-1133">Transmembrane helix</keyword>
<keyword id="KW-0813">Transport</keyword>
<feature type="chain" id="PRO_0000368478" description="ATP synthase subunit b">
    <location>
        <begin position="1"/>
        <end position="156"/>
    </location>
</feature>
<feature type="transmembrane region" description="Helical" evidence="1">
    <location>
        <begin position="11"/>
        <end position="31"/>
    </location>
</feature>
<protein>
    <recommendedName>
        <fullName evidence="1">ATP synthase subunit b</fullName>
    </recommendedName>
    <alternativeName>
        <fullName evidence="1">ATP synthase F(0) sector subunit b</fullName>
    </alternativeName>
    <alternativeName>
        <fullName evidence="1">ATPase subunit I</fullName>
    </alternativeName>
    <alternativeName>
        <fullName evidence="1">F-type ATPase subunit b</fullName>
        <shortName evidence="1">F-ATPase subunit b</shortName>
    </alternativeName>
</protein>
<proteinExistence type="inferred from homology"/>
<comment type="function">
    <text evidence="1">F(1)F(0) ATP synthase produces ATP from ADP in the presence of a proton or sodium gradient. F-type ATPases consist of two structural domains, F(1) containing the extramembraneous catalytic core and F(0) containing the membrane proton channel, linked together by a central stalk and a peripheral stalk. During catalysis, ATP synthesis in the catalytic domain of F(1) is coupled via a rotary mechanism of the central stalk subunits to proton translocation.</text>
</comment>
<comment type="function">
    <text evidence="1">Component of the F(0) channel, it forms part of the peripheral stalk, linking F(1) to F(0).</text>
</comment>
<comment type="subunit">
    <text evidence="1">F-type ATPases have 2 components, F(1) - the catalytic core - and F(0) - the membrane proton channel. F(1) has five subunits: alpha(3), beta(3), gamma(1), delta(1), epsilon(1). F(0) has three main subunits: a(1), b(2) and c(10-14). The alpha and beta chains form an alternating ring which encloses part of the gamma chain. F(1) is attached to F(0) by a central stalk formed by the gamma and epsilon chains, while a peripheral stalk is formed by the delta and b chains.</text>
</comment>
<comment type="subcellular location">
    <subcellularLocation>
        <location evidence="1">Cell inner membrane</location>
        <topology evidence="1">Single-pass membrane protein</topology>
    </subcellularLocation>
</comment>
<comment type="similarity">
    <text evidence="1">Belongs to the ATPase B chain family.</text>
</comment>
<gene>
    <name evidence="1" type="primary">atpF</name>
    <name type="ordered locus">EcE24377A_4252</name>
</gene>